<evidence type="ECO:0000255" key="1">
    <source>
        <dbReference type="HAMAP-Rule" id="MF_01821"/>
    </source>
</evidence>
<protein>
    <recommendedName>
        <fullName evidence="1">RNA polymerase-associated protein RapA</fullName>
        <ecNumber evidence="1">3.6.4.-</ecNumber>
    </recommendedName>
    <alternativeName>
        <fullName evidence="1">ATP-dependent helicase HepA</fullName>
    </alternativeName>
</protein>
<comment type="function">
    <text evidence="1">Transcription regulator that activates transcription by stimulating RNA polymerase (RNAP) recycling in case of stress conditions such as supercoiled DNA or high salt concentrations. Probably acts by releasing the RNAP, when it is trapped or immobilized on tightly supercoiled DNA. Does not activate transcription on linear DNA. Probably not involved in DNA repair.</text>
</comment>
<comment type="subunit">
    <text evidence="1">Interacts with the RNAP. Has a higher affinity for the core RNAP than for the holoenzyme. Its ATPase activity is stimulated by binding to RNAP.</text>
</comment>
<comment type="similarity">
    <text evidence="1">Belongs to the SNF2/RAD54 helicase family. RapA subfamily.</text>
</comment>
<reference key="1">
    <citation type="journal article" date="2002" name="Nat. Biotechnol.">
        <title>Genome sequence of the dissimilatory metal ion-reducing bacterium Shewanella oneidensis.</title>
        <authorList>
            <person name="Heidelberg J.F."/>
            <person name="Paulsen I.T."/>
            <person name="Nelson K.E."/>
            <person name="Gaidos E.J."/>
            <person name="Nelson W.C."/>
            <person name="Read T.D."/>
            <person name="Eisen J.A."/>
            <person name="Seshadri R."/>
            <person name="Ward N.L."/>
            <person name="Methe B.A."/>
            <person name="Clayton R.A."/>
            <person name="Meyer T."/>
            <person name="Tsapin A."/>
            <person name="Scott J."/>
            <person name="Beanan M.J."/>
            <person name="Brinkac L.M."/>
            <person name="Daugherty S.C."/>
            <person name="DeBoy R.T."/>
            <person name="Dodson R.J."/>
            <person name="Durkin A.S."/>
            <person name="Haft D.H."/>
            <person name="Kolonay J.F."/>
            <person name="Madupu R."/>
            <person name="Peterson J.D."/>
            <person name="Umayam L.A."/>
            <person name="White O."/>
            <person name="Wolf A.M."/>
            <person name="Vamathevan J.J."/>
            <person name="Weidman J.F."/>
            <person name="Impraim M."/>
            <person name="Lee K."/>
            <person name="Berry K.J."/>
            <person name="Lee C."/>
            <person name="Mueller J."/>
            <person name="Khouri H.M."/>
            <person name="Gill J."/>
            <person name="Utterback T.R."/>
            <person name="McDonald L.A."/>
            <person name="Feldblyum T.V."/>
            <person name="Smith H.O."/>
            <person name="Venter J.C."/>
            <person name="Nealson K.H."/>
            <person name="Fraser C.M."/>
        </authorList>
    </citation>
    <scope>NUCLEOTIDE SEQUENCE [LARGE SCALE GENOMIC DNA]</scope>
    <source>
        <strain>ATCC 700550 / JCM 31522 / CIP 106686 / LMG 19005 / NCIMB 14063 / MR-1</strain>
    </source>
</reference>
<name>RAPA_SHEON</name>
<accession>Q8EJ93</accession>
<feature type="chain" id="PRO_0000207186" description="RNA polymerase-associated protein RapA">
    <location>
        <begin position="1"/>
        <end position="968"/>
    </location>
</feature>
<feature type="domain" description="Helicase ATP-binding" evidence="1">
    <location>
        <begin position="163"/>
        <end position="332"/>
    </location>
</feature>
<feature type="domain" description="Helicase C-terminal" evidence="1">
    <location>
        <begin position="491"/>
        <end position="655"/>
    </location>
</feature>
<feature type="short sequence motif" description="DEAH box">
    <location>
        <begin position="278"/>
        <end position="281"/>
    </location>
</feature>
<feature type="binding site" evidence="1">
    <location>
        <begin position="176"/>
        <end position="183"/>
    </location>
    <ligand>
        <name>ATP</name>
        <dbReference type="ChEBI" id="CHEBI:30616"/>
    </ligand>
</feature>
<organism>
    <name type="scientific">Shewanella oneidensis (strain ATCC 700550 / JCM 31522 / CIP 106686 / LMG 19005 / NCIMB 14063 / MR-1)</name>
    <dbReference type="NCBI Taxonomy" id="211586"/>
    <lineage>
        <taxon>Bacteria</taxon>
        <taxon>Pseudomonadati</taxon>
        <taxon>Pseudomonadota</taxon>
        <taxon>Gammaproteobacteria</taxon>
        <taxon>Alteromonadales</taxon>
        <taxon>Shewanellaceae</taxon>
        <taxon>Shewanella</taxon>
    </lineage>
</organism>
<sequence>MPFALGQRWISDTESELGLGTVVQVEGRMVTVLFPATGENRMFSRNEAPLTRVIYNPGDTVESHEGWSLSVEELTEKDDLVVYHGIHSETGEKVSLRETLLNHNIRFNKPQDRLFAGQIDRLDRFGIRYQCQLLRHQLATSDLLGLQGPRVGLIPHQMWIAHEVGRRYAPRVLLADEVGLGKTIEAGLIIHQQLLTCRAERVLIIVPDTLRHQWLVEMLRRFNLRFSVFDEDRCVEAFADHDNPFYTEQLVICSLELLRKKKRLDQALDADWDLLVVDEAHHLEWTEEAPSRAYQVVEALSEVVPGVLLLTATPDQLGHESHFARLRLLDPDRFYDYDAFLAEENSYKDVAIAAEALAGESKLSDYAINSLTELLSEKDIAPSIRLIQAEGIDSELQQAARSELLQELLDRHGTGRVLYRNSRASVKGFPKRIFNAYPHAMPEQYLTAARVNDMMGGRKSLEAKAAQALSPEKLYQEFEDNSASWWKFDPRVDWLIEFLKSHRSKKVLIIASGADTALSLEEALRTREGIQATVFHEGMSIIERDKAGAYFAQEEGGAQALICSEIGSEGRNFQFASHLVLFDLPLNPDLLEQRIGRLDRIGQKNDIQIHLPYLQDTAQERLLQWYHQGLNAFELTCPGGHILFSEFAEELLNVLVGGDEDELTNLLNHTQSRYKELKHAMEQGRDKLLEINSHGGDKAKAIVERLAQSDQDTKLIGSVIRLWDIIGVDQEDKGENSIILRPSEHMMFPTYPGLHEDGVTVTFDRDTALSRDDIALITQEHPLVQTGLDLITGSDTGTTSVAILKNKALPAGTLFLELIYMADASAPKSSQLYRYLPPTPIRILLDKNGNDLSAKVDYTSFDKQLSAVNRHIGSKLVTASQPILHPLFAKGEEYAQVAVNELVAQAREKMTSQLTGELERLESLKAVNPNIREEELEYLRNQMQELTTYLDASQLQLDAIRMVLVSHV</sequence>
<gene>
    <name evidence="1" type="primary">rapA</name>
    <name type="synonym">hepA</name>
    <name type="ordered locus">SO_0575</name>
</gene>
<proteinExistence type="inferred from homology"/>
<keyword id="KW-0010">Activator</keyword>
<keyword id="KW-0067">ATP-binding</keyword>
<keyword id="KW-0238">DNA-binding</keyword>
<keyword id="KW-0347">Helicase</keyword>
<keyword id="KW-0378">Hydrolase</keyword>
<keyword id="KW-0547">Nucleotide-binding</keyword>
<keyword id="KW-1185">Reference proteome</keyword>
<keyword id="KW-0804">Transcription</keyword>
<keyword id="KW-0805">Transcription regulation</keyword>
<dbReference type="EC" id="3.6.4.-" evidence="1"/>
<dbReference type="EMBL" id="AE014299">
    <property type="protein sequence ID" value="AAN53655.1"/>
    <property type="molecule type" value="Genomic_DNA"/>
</dbReference>
<dbReference type="RefSeq" id="NP_716210.1">
    <property type="nucleotide sequence ID" value="NC_004347.2"/>
</dbReference>
<dbReference type="RefSeq" id="WP_011070913.1">
    <property type="nucleotide sequence ID" value="NC_004347.2"/>
</dbReference>
<dbReference type="SMR" id="Q8EJ93"/>
<dbReference type="STRING" id="211586.SO_0575"/>
<dbReference type="PaxDb" id="211586-SO_0575"/>
<dbReference type="KEGG" id="son:SO_0575"/>
<dbReference type="PATRIC" id="fig|211586.12.peg.555"/>
<dbReference type="eggNOG" id="COG0553">
    <property type="taxonomic scope" value="Bacteria"/>
</dbReference>
<dbReference type="HOGENOM" id="CLU_011520_0_0_6"/>
<dbReference type="OrthoDB" id="9814088at2"/>
<dbReference type="PhylomeDB" id="Q8EJ93"/>
<dbReference type="BioCyc" id="SONE211586:G1GMP-545-MONOMER"/>
<dbReference type="Proteomes" id="UP000008186">
    <property type="component" value="Chromosome"/>
</dbReference>
<dbReference type="GO" id="GO:0005524">
    <property type="term" value="F:ATP binding"/>
    <property type="evidence" value="ECO:0007669"/>
    <property type="project" value="UniProtKB-UniRule"/>
</dbReference>
<dbReference type="GO" id="GO:0003677">
    <property type="term" value="F:DNA binding"/>
    <property type="evidence" value="ECO:0007669"/>
    <property type="project" value="UniProtKB-KW"/>
</dbReference>
<dbReference type="GO" id="GO:0004386">
    <property type="term" value="F:helicase activity"/>
    <property type="evidence" value="ECO:0007669"/>
    <property type="project" value="UniProtKB-UniRule"/>
</dbReference>
<dbReference type="GO" id="GO:0016817">
    <property type="term" value="F:hydrolase activity, acting on acid anhydrides"/>
    <property type="evidence" value="ECO:0007669"/>
    <property type="project" value="InterPro"/>
</dbReference>
<dbReference type="GO" id="GO:0006355">
    <property type="term" value="P:regulation of DNA-templated transcription"/>
    <property type="evidence" value="ECO:0007669"/>
    <property type="project" value="UniProtKB-UniRule"/>
</dbReference>
<dbReference type="CDD" id="cd18011">
    <property type="entry name" value="DEXDc_RapA"/>
    <property type="match status" value="1"/>
</dbReference>
<dbReference type="CDD" id="cd18793">
    <property type="entry name" value="SF2_C_SNF"/>
    <property type="match status" value="1"/>
</dbReference>
<dbReference type="Gene3D" id="2.30.30.140">
    <property type="match status" value="1"/>
</dbReference>
<dbReference type="Gene3D" id="2.30.30.930">
    <property type="match status" value="1"/>
</dbReference>
<dbReference type="Gene3D" id="3.30.360.80">
    <property type="match status" value="1"/>
</dbReference>
<dbReference type="Gene3D" id="6.10.140.1500">
    <property type="match status" value="1"/>
</dbReference>
<dbReference type="Gene3D" id="6.10.140.2230">
    <property type="match status" value="1"/>
</dbReference>
<dbReference type="Gene3D" id="3.40.50.300">
    <property type="entry name" value="P-loop containing nucleotide triphosphate hydrolases"/>
    <property type="match status" value="1"/>
</dbReference>
<dbReference type="Gene3D" id="3.40.50.10810">
    <property type="entry name" value="Tandem AAA-ATPase domain"/>
    <property type="match status" value="1"/>
</dbReference>
<dbReference type="HAMAP" id="MF_01821">
    <property type="entry name" value="Helicase_RapA"/>
    <property type="match status" value="1"/>
</dbReference>
<dbReference type="InterPro" id="IPR014001">
    <property type="entry name" value="Helicase_ATP-bd"/>
</dbReference>
<dbReference type="InterPro" id="IPR001650">
    <property type="entry name" value="Helicase_C-like"/>
</dbReference>
<dbReference type="InterPro" id="IPR023949">
    <property type="entry name" value="Helicase_RapA"/>
</dbReference>
<dbReference type="InterPro" id="IPR027417">
    <property type="entry name" value="P-loop_NTPase"/>
</dbReference>
<dbReference type="InterPro" id="IPR022737">
    <property type="entry name" value="RapA_C"/>
</dbReference>
<dbReference type="InterPro" id="IPR038718">
    <property type="entry name" value="SNF2-like_sf"/>
</dbReference>
<dbReference type="InterPro" id="IPR049730">
    <property type="entry name" value="SNF2/RAD54-like_C"/>
</dbReference>
<dbReference type="InterPro" id="IPR000330">
    <property type="entry name" value="SNF2_N"/>
</dbReference>
<dbReference type="InterPro" id="IPR040765">
    <property type="entry name" value="Tudor_1_RapA"/>
</dbReference>
<dbReference type="InterPro" id="IPR040766">
    <property type="entry name" value="Tudor_2_RapA"/>
</dbReference>
<dbReference type="NCBIfam" id="NF003426">
    <property type="entry name" value="PRK04914.1"/>
    <property type="match status" value="1"/>
</dbReference>
<dbReference type="PANTHER" id="PTHR45766">
    <property type="entry name" value="DNA ANNEALING HELICASE AND ENDONUCLEASE ZRANB3 FAMILY MEMBER"/>
    <property type="match status" value="1"/>
</dbReference>
<dbReference type="PANTHER" id="PTHR45766:SF6">
    <property type="entry name" value="SWI_SNF-RELATED MATRIX-ASSOCIATED ACTIN-DEPENDENT REGULATOR OF CHROMATIN SUBFAMILY A-LIKE PROTEIN 1"/>
    <property type="match status" value="1"/>
</dbReference>
<dbReference type="Pfam" id="PF00271">
    <property type="entry name" value="Helicase_C"/>
    <property type="match status" value="1"/>
</dbReference>
<dbReference type="Pfam" id="PF12137">
    <property type="entry name" value="RapA_C"/>
    <property type="match status" value="1"/>
</dbReference>
<dbReference type="Pfam" id="PF00176">
    <property type="entry name" value="SNF2-rel_dom"/>
    <property type="match status" value="1"/>
</dbReference>
<dbReference type="Pfam" id="PF18339">
    <property type="entry name" value="Tudor_1_RapA"/>
    <property type="match status" value="1"/>
</dbReference>
<dbReference type="Pfam" id="PF18337">
    <property type="entry name" value="Tudor_RapA"/>
    <property type="match status" value="1"/>
</dbReference>
<dbReference type="SMART" id="SM00487">
    <property type="entry name" value="DEXDc"/>
    <property type="match status" value="1"/>
</dbReference>
<dbReference type="SMART" id="SM00490">
    <property type="entry name" value="HELICc"/>
    <property type="match status" value="1"/>
</dbReference>
<dbReference type="SUPFAM" id="SSF52540">
    <property type="entry name" value="P-loop containing nucleoside triphosphate hydrolases"/>
    <property type="match status" value="2"/>
</dbReference>
<dbReference type="PROSITE" id="PS51192">
    <property type="entry name" value="HELICASE_ATP_BIND_1"/>
    <property type="match status" value="1"/>
</dbReference>
<dbReference type="PROSITE" id="PS51194">
    <property type="entry name" value="HELICASE_CTER"/>
    <property type="match status" value="1"/>
</dbReference>